<sequence length="262" mass="30325">MDFLNDDELDLDLPVTAEISKELFATEIEKYRESETNGTDVDNFDVDRFLVQKNFHYLPLDSLIRDLSGLSQKMVQTLLEQIRSNYDDYLTFSNTYTDEENETLINLEKTQSDLQKFMTQLDHLIKDDISNTQEIIKDVLEYLKKLDEIYGSLRNHSQLTEALSLGKRLSKSLHEMCGIEPLEEEICSGLIEQLYKLITASRRILESCADSNSPYIHHLRNDYQDLLQEFQISLKILTEKCLENPSSLQNLSLTLVSIIKTA</sequence>
<accession>P53271</accession>
<accession>D6VUQ1</accession>
<proteinExistence type="evidence at protein level"/>
<protein>
    <recommendedName>
        <fullName>Conserved oligomeric Golgi complex subunit 2</fullName>
        <shortName>COG complex subunit 2</shortName>
    </recommendedName>
    <alternativeName>
        <fullName>Component of oligomeric Golgi complex 2</fullName>
    </alternativeName>
    <alternativeName>
        <fullName>Protein SEC35</fullName>
    </alternativeName>
</protein>
<dbReference type="EMBL" id="X83099">
    <property type="protein sequence ID" value="CAA58155.1"/>
    <property type="molecule type" value="Genomic_DNA"/>
</dbReference>
<dbReference type="EMBL" id="Z72905">
    <property type="protein sequence ID" value="CAA97130.1"/>
    <property type="molecule type" value="Genomic_DNA"/>
</dbReference>
<dbReference type="EMBL" id="BK006941">
    <property type="protein sequence ID" value="DAA08212.1"/>
    <property type="molecule type" value="Genomic_DNA"/>
</dbReference>
<dbReference type="PIR" id="S55978">
    <property type="entry name" value="S55978"/>
</dbReference>
<dbReference type="RefSeq" id="NP_011635.2">
    <property type="nucleotide sequence ID" value="NM_001181249.1"/>
</dbReference>
<dbReference type="PDB" id="2JQQ">
    <property type="method" value="NMR"/>
    <property type="chains" value="A=61-262"/>
</dbReference>
<dbReference type="PDBsum" id="2JQQ"/>
<dbReference type="BMRB" id="P53271"/>
<dbReference type="SMR" id="P53271"/>
<dbReference type="BioGRID" id="33365">
    <property type="interactions" value="244"/>
</dbReference>
<dbReference type="ComplexPortal" id="CPX-1840">
    <property type="entry name" value="COG Golgi transport complex"/>
</dbReference>
<dbReference type="DIP" id="DIP-1194N"/>
<dbReference type="FunCoup" id="P53271">
    <property type="interactions" value="90"/>
</dbReference>
<dbReference type="IntAct" id="P53271">
    <property type="interactions" value="28"/>
</dbReference>
<dbReference type="MINT" id="P53271"/>
<dbReference type="STRING" id="4932.YGR120C"/>
<dbReference type="iPTMnet" id="P53271"/>
<dbReference type="PaxDb" id="4932-YGR120C"/>
<dbReference type="PeptideAtlas" id="P53271"/>
<dbReference type="EnsemblFungi" id="YGR120C_mRNA">
    <property type="protein sequence ID" value="YGR120C"/>
    <property type="gene ID" value="YGR120C"/>
</dbReference>
<dbReference type="GeneID" id="853017"/>
<dbReference type="KEGG" id="sce:YGR120C"/>
<dbReference type="AGR" id="SGD:S000003352"/>
<dbReference type="SGD" id="S000003352">
    <property type="gene designation" value="COG2"/>
</dbReference>
<dbReference type="VEuPathDB" id="FungiDB:YGR120C"/>
<dbReference type="eggNOG" id="ENOG502RYA4">
    <property type="taxonomic scope" value="Eukaryota"/>
</dbReference>
<dbReference type="HOGENOM" id="CLU_095072_0_0_1"/>
<dbReference type="InParanoid" id="P53271"/>
<dbReference type="OMA" id="YVHHLRN"/>
<dbReference type="OrthoDB" id="4034328at2759"/>
<dbReference type="BioCyc" id="YEAST:G3O-30827-MONOMER"/>
<dbReference type="BioGRID-ORCS" id="853017">
    <property type="hits" value="0 hits in 10 CRISPR screens"/>
</dbReference>
<dbReference type="EvolutionaryTrace" id="P53271"/>
<dbReference type="PRO" id="PR:P53271"/>
<dbReference type="Proteomes" id="UP000002311">
    <property type="component" value="Chromosome VII"/>
</dbReference>
<dbReference type="RNAct" id="P53271">
    <property type="molecule type" value="protein"/>
</dbReference>
<dbReference type="GO" id="GO:0005829">
    <property type="term" value="C:cytosol"/>
    <property type="evidence" value="ECO:0007005"/>
    <property type="project" value="SGD"/>
</dbReference>
<dbReference type="GO" id="GO:0000139">
    <property type="term" value="C:Golgi membrane"/>
    <property type="evidence" value="ECO:0000303"/>
    <property type="project" value="ComplexPortal"/>
</dbReference>
<dbReference type="GO" id="GO:0017119">
    <property type="term" value="C:Golgi transport complex"/>
    <property type="evidence" value="ECO:0000315"/>
    <property type="project" value="SGD"/>
</dbReference>
<dbReference type="GO" id="GO:0032258">
    <property type="term" value="P:cytoplasm to vacuole targeting by the Cvt pathway"/>
    <property type="evidence" value="ECO:0000315"/>
    <property type="project" value="SGD"/>
</dbReference>
<dbReference type="GO" id="GO:0006888">
    <property type="term" value="P:endoplasmic reticulum to Golgi vesicle-mediated transport"/>
    <property type="evidence" value="ECO:0000316"/>
    <property type="project" value="SGD"/>
</dbReference>
<dbReference type="GO" id="GO:0006891">
    <property type="term" value="P:intra-Golgi vesicle-mediated transport"/>
    <property type="evidence" value="ECO:0000315"/>
    <property type="project" value="SGD"/>
</dbReference>
<dbReference type="GO" id="GO:0016236">
    <property type="term" value="P:macroautophagy"/>
    <property type="evidence" value="ECO:0000315"/>
    <property type="project" value="SGD"/>
</dbReference>
<dbReference type="GO" id="GO:0000425">
    <property type="term" value="P:pexophagy"/>
    <property type="evidence" value="ECO:0000315"/>
    <property type="project" value="SGD"/>
</dbReference>
<dbReference type="GO" id="GO:0000301">
    <property type="term" value="P:retrograde transport, vesicle recycling within Golgi"/>
    <property type="evidence" value="ECO:0000315"/>
    <property type="project" value="SGD"/>
</dbReference>
<dbReference type="Gene3D" id="1.20.58.1240">
    <property type="match status" value="1"/>
</dbReference>
<dbReference type="InterPro" id="IPR054494">
    <property type="entry name" value="COG2_C"/>
</dbReference>
<dbReference type="InterPro" id="IPR024602">
    <property type="entry name" value="COG_su2_N"/>
</dbReference>
<dbReference type="Pfam" id="PF06148">
    <property type="entry name" value="COG2_N"/>
    <property type="match status" value="1"/>
</dbReference>
<dbReference type="Pfam" id="PF22431">
    <property type="entry name" value="COG2p_C"/>
    <property type="match status" value="1"/>
</dbReference>
<feature type="chain" id="PRO_0000213499" description="Conserved oligomeric Golgi complex subunit 2">
    <location>
        <begin position="1"/>
        <end position="262"/>
    </location>
</feature>
<feature type="helix" evidence="8">
    <location>
        <begin position="110"/>
        <end position="127"/>
    </location>
</feature>
<feature type="helix" evidence="8">
    <location>
        <begin position="133"/>
        <end position="151"/>
    </location>
</feature>
<feature type="strand" evidence="8">
    <location>
        <begin position="154"/>
        <end position="157"/>
    </location>
</feature>
<feature type="helix" evidence="8">
    <location>
        <begin position="158"/>
        <end position="177"/>
    </location>
</feature>
<feature type="helix" evidence="8">
    <location>
        <begin position="184"/>
        <end position="208"/>
    </location>
</feature>
<feature type="helix" evidence="8">
    <location>
        <begin position="214"/>
        <end position="243"/>
    </location>
</feature>
<feature type="turn" evidence="8">
    <location>
        <begin position="245"/>
        <end position="248"/>
    </location>
</feature>
<feature type="helix" evidence="8">
    <location>
        <begin position="249"/>
        <end position="258"/>
    </location>
</feature>
<organism>
    <name type="scientific">Saccharomyces cerevisiae (strain ATCC 204508 / S288c)</name>
    <name type="common">Baker's yeast</name>
    <dbReference type="NCBI Taxonomy" id="559292"/>
    <lineage>
        <taxon>Eukaryota</taxon>
        <taxon>Fungi</taxon>
        <taxon>Dikarya</taxon>
        <taxon>Ascomycota</taxon>
        <taxon>Saccharomycotina</taxon>
        <taxon>Saccharomycetes</taxon>
        <taxon>Saccharomycetales</taxon>
        <taxon>Saccharomycetaceae</taxon>
        <taxon>Saccharomyces</taxon>
    </lineage>
</organism>
<evidence type="ECO:0000269" key="1">
    <source>
    </source>
</evidence>
<evidence type="ECO:0000269" key="2">
    <source>
    </source>
</evidence>
<evidence type="ECO:0000269" key="3">
    <source>
    </source>
</evidence>
<evidence type="ECO:0000269" key="4">
    <source>
    </source>
</evidence>
<evidence type="ECO:0000269" key="5">
    <source>
    </source>
</evidence>
<evidence type="ECO:0000269" key="6">
    <source>
    </source>
</evidence>
<evidence type="ECO:0000269" key="7">
    <source>
    </source>
</evidence>
<evidence type="ECO:0007829" key="8">
    <source>
        <dbReference type="PDB" id="2JQQ"/>
    </source>
</evidence>
<keyword id="KW-0002">3D-structure</keyword>
<keyword id="KW-0333">Golgi apparatus</keyword>
<keyword id="KW-0472">Membrane</keyword>
<keyword id="KW-0653">Protein transport</keyword>
<keyword id="KW-1185">Reference proteome</keyword>
<keyword id="KW-0813">Transport</keyword>
<gene>
    <name type="primary">COG2</name>
    <name type="synonym">SEC35</name>
    <name type="ordered locus">YGR120C</name>
    <name type="ORF">G6324</name>
</gene>
<reference key="1">
    <citation type="journal article" date="1997" name="Yeast">
        <title>An 18.3 kb DNA fragment from yeast chromosome VII carries four unknown open reading frames, the gene for an Asn synthase, remnants of Ty and three tRNA genes.</title>
        <authorList>
            <person name="van Dyck L."/>
            <person name="Tettelin H."/>
            <person name="Purnelle B."/>
            <person name="Goffeau A."/>
        </authorList>
    </citation>
    <scope>NUCLEOTIDE SEQUENCE [GENOMIC DNA]</scope>
    <source>
        <strain>ATCC 96604 / S288c / FY1679</strain>
    </source>
</reference>
<reference key="2">
    <citation type="journal article" date="1997" name="Nature">
        <title>The nucleotide sequence of Saccharomyces cerevisiae chromosome VII.</title>
        <authorList>
            <person name="Tettelin H."/>
            <person name="Agostoni-Carbone M.L."/>
            <person name="Albermann K."/>
            <person name="Albers M."/>
            <person name="Arroyo J."/>
            <person name="Backes U."/>
            <person name="Barreiros T."/>
            <person name="Bertani I."/>
            <person name="Bjourson A.J."/>
            <person name="Brueckner M."/>
            <person name="Bruschi C.V."/>
            <person name="Carignani G."/>
            <person name="Castagnoli L."/>
            <person name="Cerdan E."/>
            <person name="Clemente M.L."/>
            <person name="Coblenz A."/>
            <person name="Coglievina M."/>
            <person name="Coissac E."/>
            <person name="Defoor E."/>
            <person name="Del Bino S."/>
            <person name="Delius H."/>
            <person name="Delneri D."/>
            <person name="de Wergifosse P."/>
            <person name="Dujon B."/>
            <person name="Durand P."/>
            <person name="Entian K.-D."/>
            <person name="Eraso P."/>
            <person name="Escribano V."/>
            <person name="Fabiani L."/>
            <person name="Fartmann B."/>
            <person name="Feroli F."/>
            <person name="Feuermann M."/>
            <person name="Frontali L."/>
            <person name="Garcia-Gonzalez M."/>
            <person name="Garcia-Saez M.I."/>
            <person name="Goffeau A."/>
            <person name="Guerreiro P."/>
            <person name="Hani J."/>
            <person name="Hansen M."/>
            <person name="Hebling U."/>
            <person name="Hernandez K."/>
            <person name="Heumann K."/>
            <person name="Hilger F."/>
            <person name="Hofmann B."/>
            <person name="Indge K.J."/>
            <person name="James C.M."/>
            <person name="Klima R."/>
            <person name="Koetter P."/>
            <person name="Kramer B."/>
            <person name="Kramer W."/>
            <person name="Lauquin G."/>
            <person name="Leuther H."/>
            <person name="Louis E.J."/>
            <person name="Maillier E."/>
            <person name="Marconi A."/>
            <person name="Martegani E."/>
            <person name="Mazon M.J."/>
            <person name="Mazzoni C."/>
            <person name="McReynolds A.D.K."/>
            <person name="Melchioretto P."/>
            <person name="Mewes H.-W."/>
            <person name="Minenkova O."/>
            <person name="Mueller-Auer S."/>
            <person name="Nawrocki A."/>
            <person name="Netter P."/>
            <person name="Neu R."/>
            <person name="Nombela C."/>
            <person name="Oliver S.G."/>
            <person name="Panzeri L."/>
            <person name="Paoluzi S."/>
            <person name="Plevani P."/>
            <person name="Portetelle D."/>
            <person name="Portillo F."/>
            <person name="Potier S."/>
            <person name="Purnelle B."/>
            <person name="Rieger M."/>
            <person name="Riles L."/>
            <person name="Rinaldi T."/>
            <person name="Robben J."/>
            <person name="Rodrigues-Pousada C."/>
            <person name="Rodriguez-Belmonte E."/>
            <person name="Rodriguez-Torres A.M."/>
            <person name="Rose M."/>
            <person name="Ruzzi M."/>
            <person name="Saliola M."/>
            <person name="Sanchez-Perez M."/>
            <person name="Schaefer B."/>
            <person name="Schaefer M."/>
            <person name="Scharfe M."/>
            <person name="Schmidheini T."/>
            <person name="Schreer A."/>
            <person name="Skala J."/>
            <person name="Souciet J.-L."/>
            <person name="Steensma H.Y."/>
            <person name="Talla E."/>
            <person name="Thierry A."/>
            <person name="Vandenbol M."/>
            <person name="van der Aart Q.J.M."/>
            <person name="Van Dyck L."/>
            <person name="Vanoni M."/>
            <person name="Verhasselt P."/>
            <person name="Voet M."/>
            <person name="Volckaert G."/>
            <person name="Wambutt R."/>
            <person name="Watson M.D."/>
            <person name="Weber N."/>
            <person name="Wedler E."/>
            <person name="Wedler H."/>
            <person name="Wipfli P."/>
            <person name="Wolf K."/>
            <person name="Wright L.F."/>
            <person name="Zaccaria P."/>
            <person name="Zimmermann M."/>
            <person name="Zollner A."/>
            <person name="Kleine K."/>
        </authorList>
    </citation>
    <scope>NUCLEOTIDE SEQUENCE [LARGE SCALE GENOMIC DNA]</scope>
    <source>
        <strain>ATCC 204508 / S288c</strain>
    </source>
</reference>
<reference key="3">
    <citation type="journal article" date="2014" name="G3 (Bethesda)">
        <title>The reference genome sequence of Saccharomyces cerevisiae: Then and now.</title>
        <authorList>
            <person name="Engel S.R."/>
            <person name="Dietrich F.S."/>
            <person name="Fisk D.G."/>
            <person name="Binkley G."/>
            <person name="Balakrishnan R."/>
            <person name="Costanzo M.C."/>
            <person name="Dwight S.S."/>
            <person name="Hitz B.C."/>
            <person name="Karra K."/>
            <person name="Nash R.S."/>
            <person name="Weng S."/>
            <person name="Wong E.D."/>
            <person name="Lloyd P."/>
            <person name="Skrzypek M.S."/>
            <person name="Miyasato S.R."/>
            <person name="Simison M."/>
            <person name="Cherry J.M."/>
        </authorList>
    </citation>
    <scope>GENOME REANNOTATION</scope>
    <source>
        <strain>ATCC 204508 / S288c</strain>
    </source>
</reference>
<reference key="4">
    <citation type="journal article" date="1998" name="J. Cell Biol.">
        <title>Sec35p, a novel peripheral membrane protein, is required for ER to Golgi vesicle docking.</title>
        <authorList>
            <person name="VanRheenen S.M."/>
            <person name="Cao X."/>
            <person name="Lupashin V.V."/>
            <person name="Barlowe C."/>
            <person name="Waters M.G."/>
        </authorList>
    </citation>
    <scope>FUNCTION</scope>
    <scope>SUBCELLULAR LOCATION</scope>
</reference>
<reference key="5">
    <citation type="journal article" date="2001" name="Dev. Cell">
        <title>The Sec34/35 Golgi transport complex is related to the exocyst, defining a family of complexes involved in multiple steps of membrane traffic.</title>
        <authorList>
            <person name="Whyte J.R."/>
            <person name="Munro S."/>
        </authorList>
    </citation>
    <scope>SUBUNIT</scope>
</reference>
<reference key="6">
    <citation type="journal article" date="2002" name="J. Cell Biol.">
        <title>The Sec34/Sec35p complex, a Ypt1p effector required for retrograde intra-Golgi trafficking, interacts with Golgi SNAREs and COPI vesicle coat proteins.</title>
        <authorList>
            <person name="Suvorova E.S."/>
            <person name="Duden R."/>
            <person name="Lupashin V.V."/>
        </authorList>
    </citation>
    <scope>IDENTIFICATION IN COG COMPLEX</scope>
    <scope>SUBUNIT</scope>
</reference>
<reference key="7">
    <citation type="journal article" date="2002" name="Mol. Biol. Cell">
        <title>Identification of sec36p, sec37p, and sec38p: components of yeast complex that contains sec34p and sec35p.</title>
        <authorList>
            <person name="Ram R.J."/>
            <person name="Li B."/>
            <person name="Kaiser C.A."/>
        </authorList>
    </citation>
    <scope>FUNCTION</scope>
    <scope>IDENTIFICATION IN THE COG COMPLEX</scope>
</reference>
<reference key="8">
    <citation type="journal article" date="2003" name="Nature">
        <title>Sequencing and comparison of yeast species to identify genes and regulatory elements.</title>
        <authorList>
            <person name="Kellis M."/>
            <person name="Patterson N."/>
            <person name="Endrizzi M."/>
            <person name="Birren B.W."/>
            <person name="Lander E.S."/>
        </authorList>
    </citation>
    <scope>IDENTIFICATION OF PROBABLE INITIATION SITE</scope>
</reference>
<reference key="9">
    <citation type="journal article" date="2003" name="Nature">
        <title>Global analysis of protein localization in budding yeast.</title>
        <authorList>
            <person name="Huh W.-K."/>
            <person name="Falvo J.V."/>
            <person name="Gerke L.C."/>
            <person name="Carroll A.S."/>
            <person name="Howson R.W."/>
            <person name="Weissman J.S."/>
            <person name="O'Shea E.K."/>
        </authorList>
    </citation>
    <scope>SUBCELLULAR LOCATION [LARGE SCALE ANALYSIS]</scope>
</reference>
<reference key="10">
    <citation type="journal article" date="2003" name="Nature">
        <title>Global analysis of protein expression in yeast.</title>
        <authorList>
            <person name="Ghaemmaghami S."/>
            <person name="Huh W.-K."/>
            <person name="Bower K."/>
            <person name="Howson R.W."/>
            <person name="Belle A."/>
            <person name="Dephoure N."/>
            <person name="O'Shea E.K."/>
            <person name="Weissman J.S."/>
        </authorList>
    </citation>
    <scope>LEVEL OF PROTEIN EXPRESSION [LARGE SCALE ANALYSIS]</scope>
</reference>
<reference key="11">
    <citation type="journal article" date="2004" name="J. Biol. Chem.">
        <title>The binary interacting network of the conserved oligomeric Golgi tethering complex.</title>
        <authorList>
            <person name="Loh E."/>
            <person name="Hong W."/>
        </authorList>
    </citation>
    <scope>COMPOSITION OF THE COG COMPLEX</scope>
    <scope>INTERACTION WITH COG3 AND COG4</scope>
</reference>
<reference key="12">
    <citation type="journal article" date="2007" name="J. Biol. Chem.">
        <title>Structural analysis of conserved oligomeric Golgi complex subunit 2.</title>
        <authorList>
            <person name="Cavanaugh L.F."/>
            <person name="Chen X."/>
            <person name="Richardson B.C."/>
            <person name="Ungar D."/>
            <person name="Pelczer I."/>
            <person name="Rizo J."/>
            <person name="Hughson F.M."/>
        </authorList>
    </citation>
    <scope>STRUCTURE BY NMR OF 61-262</scope>
</reference>
<name>COG2_YEAST</name>
<comment type="function">
    <text evidence="2 7">Acts as a component of the peripheral membrane COG complex that is involved in intra-Golgi protein trafficking. COG is located at the cis-Golgi, and regulates tethering of retrograde intra-Golgi vesicles and possibly a number of other membrane trafficking events. COG2 is required for ER to Golgi vesicle docking. Not essential for viability.</text>
</comment>
<comment type="subunit">
    <text evidence="1 2 3 6">Component of the conserved oligomeric Golgi (COG or Sec34/Sec35) complex which consists of eight different proteins COG1-COG8. The COG complex interacts with the Rab GTPase YPT1, the Glogi SNAREs GOS1, SEC22, SED5, VTI1 and YKT6 and the COPI coatomer subunit gamma SEC21.</text>
</comment>
<comment type="interaction">
    <interactant intactId="EBI-16614">
        <id>P53271</id>
    </interactant>
    <interactant intactId="EBI-4835">
        <id>P53079</id>
        <label>COG1</label>
    </interactant>
    <organismsDiffer>false</organismsDiffer>
    <experiments>17</experiments>
</comment>
<comment type="interaction">
    <interactant intactId="EBI-16614">
        <id>P53271</id>
    </interactant>
    <interactant intactId="EBI-16605">
        <id>P40094</id>
        <label>COG3</label>
    </interactant>
    <organismsDiffer>false</organismsDiffer>
    <experiments>17</experiments>
</comment>
<comment type="interaction">
    <interactant intactId="EBI-16614">
        <id>P53271</id>
    </interactant>
    <interactant intactId="EBI-4823">
        <id>Q06096</id>
        <label>COG4</label>
    </interactant>
    <organismsDiffer>false</organismsDiffer>
    <experiments>16</experiments>
</comment>
<comment type="interaction">
    <interactant intactId="EBI-16614">
        <id>P53271</id>
    </interactant>
    <interactant intactId="EBI-4841">
        <id>P53951</id>
        <label>COG5</label>
    </interactant>
    <organismsDiffer>false</organismsDiffer>
    <experiments>3</experiments>
</comment>
<comment type="interaction">
    <interactant intactId="EBI-16614">
        <id>P53271</id>
    </interactant>
    <interactant intactId="EBI-4829">
        <id>P53959</id>
        <label>COG6</label>
    </interactant>
    <organismsDiffer>false</organismsDiffer>
    <experiments>3</experiments>
</comment>
<comment type="interaction">
    <interactant intactId="EBI-16614">
        <id>P53271</id>
    </interactant>
    <interactant intactId="EBI-4847">
        <id>P53195</id>
        <label>COG7</label>
    </interactant>
    <organismsDiffer>false</organismsDiffer>
    <experiments>2</experiments>
</comment>
<comment type="interaction">
    <interactant intactId="EBI-16614">
        <id>P53271</id>
    </interactant>
    <interactant intactId="EBI-6035">
        <id>Q04632</id>
        <label>COG8</label>
    </interactant>
    <organismsDiffer>false</organismsDiffer>
    <experiments>5</experiments>
</comment>
<comment type="interaction">
    <interactant intactId="EBI-16614">
        <id>P53271</id>
    </interactant>
    <interactant intactId="EBI-16930">
        <id>Q01590</id>
        <label>SED5</label>
    </interactant>
    <organismsDiffer>false</organismsDiffer>
    <experiments>2</experiments>
</comment>
<comment type="subcellular location">
    <subcellularLocation>
        <location evidence="4 7">Golgi apparatus membrane</location>
        <topology evidence="4 7">Peripheral membrane protein</topology>
        <orientation evidence="4 7">Cytoplasmic side</orientation>
    </subcellularLocation>
</comment>
<comment type="miscellaneous">
    <text evidence="5">Present with 3270 molecules/cell in log phase SD medium.</text>
</comment>